<comment type="function">
    <text evidence="1">Specifically methylates guanosine-37 in various tRNAs.</text>
</comment>
<comment type="catalytic activity">
    <reaction evidence="1">
        <text>guanosine(37) in tRNA + S-adenosyl-L-methionine = N(1)-methylguanosine(37) in tRNA + S-adenosyl-L-homocysteine + H(+)</text>
        <dbReference type="Rhea" id="RHEA:36899"/>
        <dbReference type="Rhea" id="RHEA-COMP:10145"/>
        <dbReference type="Rhea" id="RHEA-COMP:10147"/>
        <dbReference type="ChEBI" id="CHEBI:15378"/>
        <dbReference type="ChEBI" id="CHEBI:57856"/>
        <dbReference type="ChEBI" id="CHEBI:59789"/>
        <dbReference type="ChEBI" id="CHEBI:73542"/>
        <dbReference type="ChEBI" id="CHEBI:74269"/>
        <dbReference type="EC" id="2.1.1.228"/>
    </reaction>
</comment>
<comment type="subunit">
    <text evidence="1">Homodimer.</text>
</comment>
<comment type="subcellular location">
    <subcellularLocation>
        <location evidence="1">Cytoplasm</location>
    </subcellularLocation>
</comment>
<comment type="similarity">
    <text evidence="1">Belongs to the RNA methyltransferase TrmD family.</text>
</comment>
<accession>Q6LMV9</accession>
<gene>
    <name evidence="1" type="primary">trmD</name>
    <name type="ordered locus">PBPRA3039</name>
</gene>
<reference key="1">
    <citation type="journal article" date="2005" name="Science">
        <title>Life at depth: Photobacterium profundum genome sequence and expression analysis.</title>
        <authorList>
            <person name="Vezzi A."/>
            <person name="Campanaro S."/>
            <person name="D'Angelo M."/>
            <person name="Simonato F."/>
            <person name="Vitulo N."/>
            <person name="Lauro F.M."/>
            <person name="Cestaro A."/>
            <person name="Malacrida G."/>
            <person name="Simionati B."/>
            <person name="Cannata N."/>
            <person name="Romualdi C."/>
            <person name="Bartlett D.H."/>
            <person name="Valle G."/>
        </authorList>
    </citation>
    <scope>NUCLEOTIDE SEQUENCE [LARGE SCALE GENOMIC DNA]</scope>
    <source>
        <strain>ATCC BAA-1253 / SS9</strain>
    </source>
</reference>
<name>TRMD_PHOPR</name>
<proteinExistence type="inferred from homology"/>
<protein>
    <recommendedName>
        <fullName evidence="1">tRNA (guanine-N(1)-)-methyltransferase</fullName>
        <ecNumber evidence="1">2.1.1.228</ecNumber>
    </recommendedName>
    <alternativeName>
        <fullName evidence="1">M1G-methyltransferase</fullName>
    </alternativeName>
    <alternativeName>
        <fullName evidence="1">tRNA [GM37] methyltransferase</fullName>
    </alternativeName>
</protein>
<feature type="chain" id="PRO_0000060429" description="tRNA (guanine-N(1)-)-methyltransferase">
    <location>
        <begin position="1"/>
        <end position="249"/>
    </location>
</feature>
<feature type="binding site" evidence="1">
    <location>
        <position position="113"/>
    </location>
    <ligand>
        <name>S-adenosyl-L-methionine</name>
        <dbReference type="ChEBI" id="CHEBI:59789"/>
    </ligand>
</feature>
<feature type="binding site" evidence="1">
    <location>
        <begin position="133"/>
        <end position="138"/>
    </location>
    <ligand>
        <name>S-adenosyl-L-methionine</name>
        <dbReference type="ChEBI" id="CHEBI:59789"/>
    </ligand>
</feature>
<keyword id="KW-0963">Cytoplasm</keyword>
<keyword id="KW-0489">Methyltransferase</keyword>
<keyword id="KW-1185">Reference proteome</keyword>
<keyword id="KW-0949">S-adenosyl-L-methionine</keyword>
<keyword id="KW-0808">Transferase</keyword>
<keyword id="KW-0819">tRNA processing</keyword>
<evidence type="ECO:0000255" key="1">
    <source>
        <dbReference type="HAMAP-Rule" id="MF_00605"/>
    </source>
</evidence>
<organism>
    <name type="scientific">Photobacterium profundum (strain SS9)</name>
    <dbReference type="NCBI Taxonomy" id="298386"/>
    <lineage>
        <taxon>Bacteria</taxon>
        <taxon>Pseudomonadati</taxon>
        <taxon>Pseudomonadota</taxon>
        <taxon>Gammaproteobacteria</taxon>
        <taxon>Vibrionales</taxon>
        <taxon>Vibrionaceae</taxon>
        <taxon>Photobacterium</taxon>
    </lineage>
</organism>
<sequence>MWVGVISLFPEMFTSITNFGVTGQAVKKGLLSIDTWNPRDFTEDKHRTVDDRPYGGGPGMLMMVQPLRDAIHTAKKSAKGKAKVIYLSPQGRKLDQAGVEELAQNESLILICGRYEGVDERIIQQEVDEEWSIGDFVLTGGELPAMTLVDAVVRFVPGVLGDFASAEEDSFANGLLDCPHYTRPDVLDGHAVPKVLMSGNHKDISRWRLKQSLGRTWLRRPELLGNLALTDDQEFLLAEFIREYKASII</sequence>
<dbReference type="EC" id="2.1.1.228" evidence="1"/>
<dbReference type="EMBL" id="CR378672">
    <property type="protein sequence ID" value="CAG21367.1"/>
    <property type="molecule type" value="Genomic_DNA"/>
</dbReference>
<dbReference type="RefSeq" id="WP_006232608.1">
    <property type="nucleotide sequence ID" value="NC_006370.1"/>
</dbReference>
<dbReference type="SMR" id="Q6LMV9"/>
<dbReference type="STRING" id="298386.PBPRA3039"/>
<dbReference type="KEGG" id="ppr:PBPRA3039"/>
<dbReference type="eggNOG" id="COG0336">
    <property type="taxonomic scope" value="Bacteria"/>
</dbReference>
<dbReference type="HOGENOM" id="CLU_047363_0_1_6"/>
<dbReference type="Proteomes" id="UP000000593">
    <property type="component" value="Chromosome 1"/>
</dbReference>
<dbReference type="GO" id="GO:0005829">
    <property type="term" value="C:cytosol"/>
    <property type="evidence" value="ECO:0007669"/>
    <property type="project" value="TreeGrafter"/>
</dbReference>
<dbReference type="GO" id="GO:0052906">
    <property type="term" value="F:tRNA (guanine(37)-N1)-methyltransferase activity"/>
    <property type="evidence" value="ECO:0007669"/>
    <property type="project" value="UniProtKB-UniRule"/>
</dbReference>
<dbReference type="GO" id="GO:0002939">
    <property type="term" value="P:tRNA N1-guanine methylation"/>
    <property type="evidence" value="ECO:0007669"/>
    <property type="project" value="TreeGrafter"/>
</dbReference>
<dbReference type="CDD" id="cd18080">
    <property type="entry name" value="TrmD-like"/>
    <property type="match status" value="1"/>
</dbReference>
<dbReference type="FunFam" id="1.10.1270.20:FF:000001">
    <property type="entry name" value="tRNA (guanine-N(1)-)-methyltransferase"/>
    <property type="match status" value="1"/>
</dbReference>
<dbReference type="FunFam" id="3.40.1280.10:FF:000001">
    <property type="entry name" value="tRNA (guanine-N(1)-)-methyltransferase"/>
    <property type="match status" value="1"/>
</dbReference>
<dbReference type="Gene3D" id="3.40.1280.10">
    <property type="match status" value="1"/>
</dbReference>
<dbReference type="Gene3D" id="1.10.1270.20">
    <property type="entry name" value="tRNA(m1g37)methyltransferase, domain 2"/>
    <property type="match status" value="1"/>
</dbReference>
<dbReference type="HAMAP" id="MF_00605">
    <property type="entry name" value="TrmD"/>
    <property type="match status" value="1"/>
</dbReference>
<dbReference type="InterPro" id="IPR029028">
    <property type="entry name" value="Alpha/beta_knot_MTases"/>
</dbReference>
<dbReference type="InterPro" id="IPR023148">
    <property type="entry name" value="tRNA_m1G_MeTrfase_C_sf"/>
</dbReference>
<dbReference type="InterPro" id="IPR002649">
    <property type="entry name" value="tRNA_m1G_MeTrfase_TrmD"/>
</dbReference>
<dbReference type="InterPro" id="IPR029026">
    <property type="entry name" value="tRNA_m1G_MTases_N"/>
</dbReference>
<dbReference type="InterPro" id="IPR016009">
    <property type="entry name" value="tRNA_MeTrfase_TRMD/TRM10"/>
</dbReference>
<dbReference type="NCBIfam" id="NF000648">
    <property type="entry name" value="PRK00026.1"/>
    <property type="match status" value="1"/>
</dbReference>
<dbReference type="NCBIfam" id="TIGR00088">
    <property type="entry name" value="trmD"/>
    <property type="match status" value="1"/>
</dbReference>
<dbReference type="PANTHER" id="PTHR46417">
    <property type="entry name" value="TRNA (GUANINE-N(1)-)-METHYLTRANSFERASE"/>
    <property type="match status" value="1"/>
</dbReference>
<dbReference type="PANTHER" id="PTHR46417:SF1">
    <property type="entry name" value="TRNA (GUANINE-N(1)-)-METHYLTRANSFERASE"/>
    <property type="match status" value="1"/>
</dbReference>
<dbReference type="Pfam" id="PF01746">
    <property type="entry name" value="tRNA_m1G_MT"/>
    <property type="match status" value="1"/>
</dbReference>
<dbReference type="PIRSF" id="PIRSF000386">
    <property type="entry name" value="tRNA_mtase"/>
    <property type="match status" value="1"/>
</dbReference>
<dbReference type="SUPFAM" id="SSF75217">
    <property type="entry name" value="alpha/beta knot"/>
    <property type="match status" value="1"/>
</dbReference>